<feature type="transit peptide" description="Chloroplast and chromoplast" evidence="3">
    <location>
        <begin position="1"/>
        <end position="98"/>
    </location>
</feature>
<feature type="chain" id="PRO_0000006328" description="15-cis-phytoene desaturase, chloroplastic/chromoplastic">
    <location>
        <begin position="99"/>
        <end position="570"/>
    </location>
</feature>
<feature type="binding site" evidence="3">
    <location>
        <begin position="105"/>
        <end position="121"/>
    </location>
    <ligand>
        <name>FAD</name>
        <dbReference type="ChEBI" id="CHEBI:57692"/>
    </ligand>
</feature>
<feature type="binding site" evidence="1">
    <location>
        <position position="109"/>
    </location>
    <ligand>
        <name>FAD</name>
        <dbReference type="ChEBI" id="CHEBI:57692"/>
    </ligand>
</feature>
<feature type="binding site" evidence="1">
    <location>
        <begin position="128"/>
        <end position="129"/>
    </location>
    <ligand>
        <name>FAD</name>
        <dbReference type="ChEBI" id="CHEBI:57692"/>
    </ligand>
</feature>
<feature type="binding site" evidence="1">
    <location>
        <position position="136"/>
    </location>
    <ligand>
        <name>FAD</name>
        <dbReference type="ChEBI" id="CHEBI:57692"/>
    </ligand>
</feature>
<feature type="binding site" evidence="1">
    <location>
        <begin position="153"/>
        <end position="154"/>
    </location>
    <ligand>
        <name>FAD</name>
        <dbReference type="ChEBI" id="CHEBI:57692"/>
    </ligand>
</feature>
<feature type="binding site" evidence="1">
    <location>
        <position position="159"/>
    </location>
    <ligand>
        <name>FAD</name>
        <dbReference type="ChEBI" id="CHEBI:57692"/>
    </ligand>
</feature>
<feature type="binding site" evidence="1">
    <location>
        <position position="294"/>
    </location>
    <ligand>
        <name>substrate</name>
    </ligand>
</feature>
<feature type="binding site" evidence="1">
    <location>
        <position position="336"/>
    </location>
    <ligand>
        <name>FAD</name>
        <dbReference type="ChEBI" id="CHEBI:57692"/>
    </ligand>
</feature>
<feature type="binding site" evidence="1">
    <location>
        <position position="525"/>
    </location>
    <ligand>
        <name>FAD</name>
        <dbReference type="ChEBI" id="CHEBI:57692"/>
    </ligand>
</feature>
<feature type="binding site" evidence="1">
    <location>
        <position position="533"/>
    </location>
    <ligand>
        <name>substrate</name>
    </ligand>
</feature>
<feature type="binding site" evidence="1">
    <location>
        <position position="535"/>
    </location>
    <ligand>
        <name>FAD</name>
        <dbReference type="ChEBI" id="CHEBI:57692"/>
    </ligand>
</feature>
<protein>
    <recommendedName>
        <fullName evidence="4">15-cis-phytoene desaturase, chloroplastic/chromoplastic</fullName>
        <ecNumber evidence="1">1.3.5.5</ecNumber>
    </recommendedName>
    <alternativeName>
        <fullName evidence="4">Phytoene dehydrogenase</fullName>
    </alternativeName>
    <alternativeName>
        <fullName evidence="4">Phytoene desaturase</fullName>
    </alternativeName>
</protein>
<name>PDS_SOYBN</name>
<comment type="function">
    <text evidence="1">Converts phytoene into zeta-carotene via the intermediary of phytofluene by the symmetrical introduction of two double bonds at the C-11 and C-11' positions of phytoene with a concomitant isomerization of two neighboring double bonds at the C9 and C9' positions from trans to cis.</text>
</comment>
<comment type="catalytic activity">
    <reaction evidence="1">
        <text>2 a plastoquinone + 15-cis-phytoene = 9,9',15-tri-cis-zeta-carotene + 2 a plastoquinol</text>
        <dbReference type="Rhea" id="RHEA:30287"/>
        <dbReference type="Rhea" id="RHEA-COMP:9561"/>
        <dbReference type="Rhea" id="RHEA-COMP:9562"/>
        <dbReference type="ChEBI" id="CHEBI:17757"/>
        <dbReference type="ChEBI" id="CHEBI:27787"/>
        <dbReference type="ChEBI" id="CHEBI:48717"/>
        <dbReference type="ChEBI" id="CHEBI:62192"/>
        <dbReference type="EC" id="1.3.5.5"/>
    </reaction>
</comment>
<comment type="cofactor">
    <cofactor evidence="1">
        <name>FAD</name>
        <dbReference type="ChEBI" id="CHEBI:57692"/>
    </cofactor>
</comment>
<comment type="pathway">
    <text>Carotenoid biosynthesis; lycopene biosynthesis.</text>
</comment>
<comment type="subunit">
    <text evidence="1">Homotetramer.</text>
</comment>
<comment type="subcellular location">
    <subcellularLocation>
        <location evidence="2">Plastid</location>
        <location evidence="2">Chloroplast</location>
    </subcellularLocation>
    <subcellularLocation>
        <location evidence="2">Plastid</location>
        <location evidence="2">Chromoplast</location>
    </subcellularLocation>
    <subcellularLocation>
        <location evidence="1">Membrane</location>
        <topology evidence="1">Peripheral membrane protein</topology>
    </subcellularLocation>
</comment>
<comment type="similarity">
    <text evidence="4">Belongs to the carotenoid/retinoid oxidoreductase family.</text>
</comment>
<accession>P28553</accession>
<keyword id="KW-0125">Carotenoid biosynthesis</keyword>
<keyword id="KW-0150">Chloroplast</keyword>
<keyword id="KW-0957">Chromoplast</keyword>
<keyword id="KW-0274">FAD</keyword>
<keyword id="KW-0285">Flavoprotein</keyword>
<keyword id="KW-0472">Membrane</keyword>
<keyword id="KW-0520">NAD</keyword>
<keyword id="KW-0560">Oxidoreductase</keyword>
<keyword id="KW-0934">Plastid</keyword>
<keyword id="KW-1185">Reference proteome</keyword>
<keyword id="KW-0809">Transit peptide</keyword>
<reference key="1">
    <citation type="journal article" date="1991" name="Proc. Natl. Acad. Sci. U.S.A.">
        <title>Molecular cloning and expression in photosynthetic bacteria of a soybean cDNA coding for phytoene desaturase, an enzyme of the carotenoid biosynthesis pathway.</title>
        <authorList>
            <person name="Bartley G.E."/>
            <person name="Viitanen P.V."/>
            <person name="Pecker I."/>
            <person name="Chamovitz D."/>
            <person name="Hirschberg J."/>
            <person name="Scolnik P.A."/>
        </authorList>
    </citation>
    <scope>NUCLEOTIDE SEQUENCE [MRNA]</scope>
    <source>
        <tissue>Leaf</tissue>
    </source>
</reference>
<organism>
    <name type="scientific">Glycine max</name>
    <name type="common">Soybean</name>
    <name type="synonym">Glycine hispida</name>
    <dbReference type="NCBI Taxonomy" id="3847"/>
    <lineage>
        <taxon>Eukaryota</taxon>
        <taxon>Viridiplantae</taxon>
        <taxon>Streptophyta</taxon>
        <taxon>Embryophyta</taxon>
        <taxon>Tracheophyta</taxon>
        <taxon>Spermatophyta</taxon>
        <taxon>Magnoliopsida</taxon>
        <taxon>eudicotyledons</taxon>
        <taxon>Gunneridae</taxon>
        <taxon>Pentapetalae</taxon>
        <taxon>rosids</taxon>
        <taxon>fabids</taxon>
        <taxon>Fabales</taxon>
        <taxon>Fabaceae</taxon>
        <taxon>Papilionoideae</taxon>
        <taxon>50 kb inversion clade</taxon>
        <taxon>NPAAA clade</taxon>
        <taxon>indigoferoid/millettioid clade</taxon>
        <taxon>Phaseoleae</taxon>
        <taxon>Glycine</taxon>
        <taxon>Glycine subgen. Soja</taxon>
    </lineage>
</organism>
<gene>
    <name type="primary">PDS1</name>
</gene>
<evidence type="ECO:0000250" key="1">
    <source>
        <dbReference type="UniProtKB" id="A2XDA1"/>
    </source>
</evidence>
<evidence type="ECO:0000250" key="2">
    <source>
        <dbReference type="UniProtKB" id="Q40406"/>
    </source>
</evidence>
<evidence type="ECO:0000255" key="3"/>
<evidence type="ECO:0000305" key="4"/>
<dbReference type="EC" id="1.3.5.5" evidence="1"/>
<dbReference type="EMBL" id="M64704">
    <property type="protein sequence ID" value="AAA34001.1"/>
    <property type="molecule type" value="mRNA"/>
</dbReference>
<dbReference type="PIR" id="A39597">
    <property type="entry name" value="A39597"/>
</dbReference>
<dbReference type="RefSeq" id="NP_001236769.1">
    <property type="nucleotide sequence ID" value="NM_001249840.1"/>
</dbReference>
<dbReference type="SMR" id="P28553"/>
<dbReference type="FunCoup" id="P28553">
    <property type="interactions" value="1977"/>
</dbReference>
<dbReference type="STRING" id="3847.P28553"/>
<dbReference type="PaxDb" id="3847-GLYMA18G00720.1"/>
<dbReference type="GeneID" id="547970"/>
<dbReference type="KEGG" id="gmx:547970"/>
<dbReference type="eggNOG" id="KOG0029">
    <property type="taxonomic scope" value="Eukaryota"/>
</dbReference>
<dbReference type="InParanoid" id="P28553"/>
<dbReference type="OrthoDB" id="5046242at2759"/>
<dbReference type="UniPathway" id="UPA00803"/>
<dbReference type="Proteomes" id="UP000008827">
    <property type="component" value="Unplaced"/>
</dbReference>
<dbReference type="GO" id="GO:0009507">
    <property type="term" value="C:chloroplast"/>
    <property type="evidence" value="ECO:0000250"/>
    <property type="project" value="UniProtKB"/>
</dbReference>
<dbReference type="GO" id="GO:0009509">
    <property type="term" value="C:chromoplast"/>
    <property type="evidence" value="ECO:0000250"/>
    <property type="project" value="UniProtKB"/>
</dbReference>
<dbReference type="GO" id="GO:0016020">
    <property type="term" value="C:membrane"/>
    <property type="evidence" value="ECO:0007669"/>
    <property type="project" value="UniProtKB-SubCell"/>
</dbReference>
<dbReference type="GO" id="GO:0071949">
    <property type="term" value="F:FAD binding"/>
    <property type="evidence" value="ECO:0000250"/>
    <property type="project" value="UniProtKB"/>
</dbReference>
<dbReference type="GO" id="GO:0016166">
    <property type="term" value="F:phytoene dehydrogenase activity"/>
    <property type="evidence" value="ECO:0000250"/>
    <property type="project" value="UniProtKB"/>
</dbReference>
<dbReference type="GO" id="GO:0016120">
    <property type="term" value="P:carotene biosynthetic process"/>
    <property type="evidence" value="ECO:0000250"/>
    <property type="project" value="UniProtKB"/>
</dbReference>
<dbReference type="GO" id="GO:0016117">
    <property type="term" value="P:carotenoid biosynthetic process"/>
    <property type="evidence" value="ECO:0000318"/>
    <property type="project" value="GO_Central"/>
</dbReference>
<dbReference type="GO" id="GO:0051289">
    <property type="term" value="P:protein homotetramerization"/>
    <property type="evidence" value="ECO:0000250"/>
    <property type="project" value="UniProtKB"/>
</dbReference>
<dbReference type="FunFam" id="3.50.50.60:FF:000091">
    <property type="entry name" value="15-cis-phytoene desaturase, chloroplastic/chromoplastic"/>
    <property type="match status" value="1"/>
</dbReference>
<dbReference type="Gene3D" id="3.50.50.60">
    <property type="entry name" value="FAD/NAD(P)-binding domain"/>
    <property type="match status" value="1"/>
</dbReference>
<dbReference type="InterPro" id="IPR002937">
    <property type="entry name" value="Amino_oxidase"/>
</dbReference>
<dbReference type="InterPro" id="IPR036188">
    <property type="entry name" value="FAD/NAD-bd_sf"/>
</dbReference>
<dbReference type="InterPro" id="IPR014102">
    <property type="entry name" value="Phytoene_desaturase"/>
</dbReference>
<dbReference type="InterPro" id="IPR050464">
    <property type="entry name" value="Zeta_carotene_desat/Oxidored"/>
</dbReference>
<dbReference type="NCBIfam" id="TIGR02731">
    <property type="entry name" value="phytoene_desat"/>
    <property type="match status" value="1"/>
</dbReference>
<dbReference type="PANTHER" id="PTHR42923:SF45">
    <property type="entry name" value="15-CIS-PHYTOENE DESATURASE, CHLOROPLASTIC_CHROMOPLASTIC"/>
    <property type="match status" value="1"/>
</dbReference>
<dbReference type="PANTHER" id="PTHR42923">
    <property type="entry name" value="PROTOPORPHYRINOGEN OXIDASE"/>
    <property type="match status" value="1"/>
</dbReference>
<dbReference type="Pfam" id="PF01593">
    <property type="entry name" value="Amino_oxidase"/>
    <property type="match status" value="1"/>
</dbReference>
<dbReference type="SUPFAM" id="SSF51905">
    <property type="entry name" value="FAD/NAD(P)-binding domain"/>
    <property type="match status" value="1"/>
</dbReference>
<proteinExistence type="evidence at transcript level"/>
<sequence>MAACGYISAANFNYLVGARNISKFASSDATISFSFGGSDSMGLTLRPAPIRAPKRNHFSPLRVVCVDYPRPELENTVNFVEAAYLSSTFRASPRPLKPLNIVIAGAGLAGLSTAKYLADAGHKPILLEARDVLGGKVAAWKDKDGDWYETGLHIFFGAYPYVQNLFGELGINDRLQWKEHSMIFAMPNKPGEFSRFDFPEVLPSPLNGIWAILRNNEMLTWPEKVKFAIGLLPAMLGGQPYVEAQDGLSVQEWMKKQGVPERVADEVFIAMSKALNFINPDELSMQCILIALNRFLQEKHGSKMAFLDGNPPERLCMPIVDYIQSLGGEVHLNSRIQKIELNDDGTVKSFLLNNGKVMEGDAYVFATPVDILKLLLPDNWKGIPYFQRLDKLVGVPVINVHIWFDRKLKNTYDHLLFSRSPLLSVYADMSVTCKEYYSPNQSMLELVFAPAEEWISRSDDDIIQATMTELAKLFPDEISADQSKAKILKYHVVKTPRSVYKTVPNCEPCRPIQRSPIEGFYLAGDYTKQKYLASMEGAVLSGKLCAQAIVQDSELLATRGQKRMAKASVV</sequence>